<reference key="1">
    <citation type="journal article" date="2002" name="J. Bacteriol.">
        <title>Whole-genome comparison of Mycobacterium tuberculosis clinical and laboratory strains.</title>
        <authorList>
            <person name="Fleischmann R.D."/>
            <person name="Alland D."/>
            <person name="Eisen J.A."/>
            <person name="Carpenter L."/>
            <person name="White O."/>
            <person name="Peterson J.D."/>
            <person name="DeBoy R.T."/>
            <person name="Dodson R.J."/>
            <person name="Gwinn M.L."/>
            <person name="Haft D.H."/>
            <person name="Hickey E.K."/>
            <person name="Kolonay J.F."/>
            <person name="Nelson W.C."/>
            <person name="Umayam L.A."/>
            <person name="Ermolaeva M.D."/>
            <person name="Salzberg S.L."/>
            <person name="Delcher A."/>
            <person name="Utterback T.R."/>
            <person name="Weidman J.F."/>
            <person name="Khouri H.M."/>
            <person name="Gill J."/>
            <person name="Mikula A."/>
            <person name="Bishai W."/>
            <person name="Jacobs W.R. Jr."/>
            <person name="Venter J.C."/>
            <person name="Fraser C.M."/>
        </authorList>
    </citation>
    <scope>NUCLEOTIDE SEQUENCE [LARGE SCALE GENOMIC DNA]</scope>
    <source>
        <strain>CDC 1551 / Oshkosh</strain>
    </source>
</reference>
<keyword id="KW-1003">Cell membrane</keyword>
<keyword id="KW-0472">Membrane</keyword>
<keyword id="KW-1185">Reference proteome</keyword>
<keyword id="KW-0812">Transmembrane</keyword>
<keyword id="KW-1133">Transmembrane helix</keyword>
<accession>P9WKZ4</accession>
<accession>L0TFI3</accession>
<accession>P65071</accession>
<accession>Q50722</accession>
<dbReference type="EMBL" id="AE000516">
    <property type="protein sequence ID" value="AAK47849.1"/>
    <property type="molecule type" value="Genomic_DNA"/>
</dbReference>
<dbReference type="PIR" id="H70735">
    <property type="entry name" value="H70735"/>
</dbReference>
<dbReference type="RefSeq" id="WP_003417969.1">
    <property type="nucleotide sequence ID" value="NZ_KK341227.1"/>
</dbReference>
<dbReference type="SMR" id="P9WKZ4"/>
<dbReference type="KEGG" id="mtc:MT3511"/>
<dbReference type="PATRIC" id="fig|83331.31.peg.3769"/>
<dbReference type="HOGENOM" id="CLU_038677_1_0_11"/>
<dbReference type="Proteomes" id="UP000001020">
    <property type="component" value="Chromosome"/>
</dbReference>
<dbReference type="GO" id="GO:0005886">
    <property type="term" value="C:plasma membrane"/>
    <property type="evidence" value="ECO:0007669"/>
    <property type="project" value="UniProtKB-SubCell"/>
</dbReference>
<dbReference type="InterPro" id="IPR036188">
    <property type="entry name" value="FAD/NAD-bd_sf"/>
</dbReference>
<dbReference type="InterPro" id="IPR038732">
    <property type="entry name" value="HpyO/CreE_NAD-binding"/>
</dbReference>
<dbReference type="InterPro" id="IPR052189">
    <property type="entry name" value="L-asp_N-monooxygenase_NS-form"/>
</dbReference>
<dbReference type="PANTHER" id="PTHR40254">
    <property type="entry name" value="BLR0577 PROTEIN"/>
    <property type="match status" value="1"/>
</dbReference>
<dbReference type="PANTHER" id="PTHR40254:SF1">
    <property type="entry name" value="BLR0577 PROTEIN"/>
    <property type="match status" value="1"/>
</dbReference>
<dbReference type="Pfam" id="PF13454">
    <property type="entry name" value="NAD_binding_9"/>
    <property type="match status" value="1"/>
</dbReference>
<dbReference type="SUPFAM" id="SSF51905">
    <property type="entry name" value="FAD/NAD(P)-binding domain"/>
    <property type="match status" value="1"/>
</dbReference>
<name>Y3403_MYCTO</name>
<comment type="subcellular location">
    <subcellularLocation>
        <location evidence="2">Cell membrane</location>
        <topology evidence="2">Multi-pass membrane protein</topology>
    </subcellularLocation>
</comment>
<evidence type="ECO:0000255" key="1"/>
<evidence type="ECO:0000305" key="2"/>
<proteinExistence type="predicted"/>
<organism>
    <name type="scientific">Mycobacterium tuberculosis (strain CDC 1551 / Oshkosh)</name>
    <dbReference type="NCBI Taxonomy" id="83331"/>
    <lineage>
        <taxon>Bacteria</taxon>
        <taxon>Bacillati</taxon>
        <taxon>Actinomycetota</taxon>
        <taxon>Actinomycetes</taxon>
        <taxon>Mycobacteriales</taxon>
        <taxon>Mycobacteriaceae</taxon>
        <taxon>Mycobacterium</taxon>
        <taxon>Mycobacterium tuberculosis complex</taxon>
    </lineage>
</organism>
<sequence>MLAFPYLMTMITPPTFDVAFIGSGAACSMTLLEMADALLSSPSASPKLRIAVVERDEQFWCGIPYGQRSSIGSLAIQKLDDFADEPEKAAYRIWLEQNKQRWLAFFQAEGGAAAARWICDNRDALDGNQWGELYLPRFLFGVFLSEQMIAAIAALGERDLAEIVTIRAEAMSAHSADGHYRIGLRPSGNGPTAIAAGKVVVAIGSPPTKAILASDSEPAFTYINDFYSPGGESNVARLRDSLDRVESWEKRNVLVVGSNATSLEALYLMRHDARIRARVRSITVISRSGVLPYMICNQPPEFDFPRLRTLLCTEAIAAADLMSAIRDDLATAEERSLNLADLYDAVAALFGQALHKMDLVQQEEFFCVHGMNFTKLVRRAGRDCRQASEELAADGTLSLLAGEVLRVDACASGQPFATMTYRAAGAEHTHPVPFAAVVNCGGFEELDTCSSPFLVSAMQNGLCRPNRTNRGLLVNDDFEASPGFCVIGPLVGGNFTPKIRFWHVESAPRVRSLAKSLAASLLASLQPVALAPC</sequence>
<protein>
    <recommendedName>
        <fullName>Uncharacterized protein MT3511</fullName>
    </recommendedName>
</protein>
<gene>
    <name type="ordered locus">MT3511</name>
</gene>
<feature type="chain" id="PRO_0000427568" description="Uncharacterized protein MT3511">
    <location>
        <begin position="1"/>
        <end position="533"/>
    </location>
</feature>
<feature type="transmembrane region" description="Helical" evidence="1">
    <location>
        <begin position="1"/>
        <end position="21"/>
    </location>
</feature>
<feature type="transmembrane region" description="Helical" evidence="1">
    <location>
        <begin position="135"/>
        <end position="155"/>
    </location>
</feature>
<feature type="transmembrane region" description="Helical" evidence="1">
    <location>
        <begin position="193"/>
        <end position="213"/>
    </location>
</feature>
<feature type="transmembrane region" description="Helical" evidence="1">
    <location>
        <begin position="472"/>
        <end position="492"/>
    </location>
</feature>